<gene>
    <name evidence="1" type="primary">rpsF</name>
    <name type="ordered locus">Rpal_3487</name>
</gene>
<keyword id="KW-0687">Ribonucleoprotein</keyword>
<keyword id="KW-0689">Ribosomal protein</keyword>
<keyword id="KW-0694">RNA-binding</keyword>
<keyword id="KW-0699">rRNA-binding</keyword>
<evidence type="ECO:0000255" key="1">
    <source>
        <dbReference type="HAMAP-Rule" id="MF_00360"/>
    </source>
</evidence>
<evidence type="ECO:0000256" key="2">
    <source>
        <dbReference type="SAM" id="MobiDB-lite"/>
    </source>
</evidence>
<evidence type="ECO:0000305" key="3"/>
<dbReference type="EMBL" id="CP001096">
    <property type="protein sequence ID" value="ACF01988.1"/>
    <property type="molecule type" value="Genomic_DNA"/>
</dbReference>
<dbReference type="RefSeq" id="WP_011158622.1">
    <property type="nucleotide sequence ID" value="NC_011004.1"/>
</dbReference>
<dbReference type="SMR" id="B3Q9T5"/>
<dbReference type="GeneID" id="66894159"/>
<dbReference type="KEGG" id="rpt:Rpal_3487"/>
<dbReference type="HOGENOM" id="CLU_113441_2_0_5"/>
<dbReference type="OrthoDB" id="9812702at2"/>
<dbReference type="Proteomes" id="UP000001725">
    <property type="component" value="Chromosome"/>
</dbReference>
<dbReference type="GO" id="GO:0022627">
    <property type="term" value="C:cytosolic small ribosomal subunit"/>
    <property type="evidence" value="ECO:0007669"/>
    <property type="project" value="TreeGrafter"/>
</dbReference>
<dbReference type="GO" id="GO:0070181">
    <property type="term" value="F:small ribosomal subunit rRNA binding"/>
    <property type="evidence" value="ECO:0007669"/>
    <property type="project" value="TreeGrafter"/>
</dbReference>
<dbReference type="GO" id="GO:0003735">
    <property type="term" value="F:structural constituent of ribosome"/>
    <property type="evidence" value="ECO:0007669"/>
    <property type="project" value="InterPro"/>
</dbReference>
<dbReference type="GO" id="GO:0006412">
    <property type="term" value="P:translation"/>
    <property type="evidence" value="ECO:0007669"/>
    <property type="project" value="UniProtKB-UniRule"/>
</dbReference>
<dbReference type="CDD" id="cd00473">
    <property type="entry name" value="bS6"/>
    <property type="match status" value="1"/>
</dbReference>
<dbReference type="Gene3D" id="3.30.70.60">
    <property type="match status" value="1"/>
</dbReference>
<dbReference type="HAMAP" id="MF_00360">
    <property type="entry name" value="Ribosomal_bS6"/>
    <property type="match status" value="1"/>
</dbReference>
<dbReference type="InterPro" id="IPR000529">
    <property type="entry name" value="Ribosomal_bS6"/>
</dbReference>
<dbReference type="InterPro" id="IPR035980">
    <property type="entry name" value="Ribosomal_bS6_sf"/>
</dbReference>
<dbReference type="InterPro" id="IPR020814">
    <property type="entry name" value="Ribosomal_S6_plastid/chlpt"/>
</dbReference>
<dbReference type="InterPro" id="IPR014717">
    <property type="entry name" value="Transl_elong_EF1B/ribsomal_bS6"/>
</dbReference>
<dbReference type="NCBIfam" id="TIGR00166">
    <property type="entry name" value="S6"/>
    <property type="match status" value="1"/>
</dbReference>
<dbReference type="PANTHER" id="PTHR21011">
    <property type="entry name" value="MITOCHONDRIAL 28S RIBOSOMAL PROTEIN S6"/>
    <property type="match status" value="1"/>
</dbReference>
<dbReference type="PANTHER" id="PTHR21011:SF1">
    <property type="entry name" value="SMALL RIBOSOMAL SUBUNIT PROTEIN BS6M"/>
    <property type="match status" value="1"/>
</dbReference>
<dbReference type="Pfam" id="PF01250">
    <property type="entry name" value="Ribosomal_S6"/>
    <property type="match status" value="1"/>
</dbReference>
<dbReference type="SUPFAM" id="SSF54995">
    <property type="entry name" value="Ribosomal protein S6"/>
    <property type="match status" value="1"/>
</dbReference>
<organism>
    <name type="scientific">Rhodopseudomonas palustris (strain TIE-1)</name>
    <dbReference type="NCBI Taxonomy" id="395960"/>
    <lineage>
        <taxon>Bacteria</taxon>
        <taxon>Pseudomonadati</taxon>
        <taxon>Pseudomonadota</taxon>
        <taxon>Alphaproteobacteria</taxon>
        <taxon>Hyphomicrobiales</taxon>
        <taxon>Nitrobacteraceae</taxon>
        <taxon>Rhodopseudomonas</taxon>
    </lineage>
</organism>
<comment type="function">
    <text evidence="1">Binds together with bS18 to 16S ribosomal RNA.</text>
</comment>
<comment type="similarity">
    <text evidence="1">Belongs to the bacterial ribosomal protein bS6 family.</text>
</comment>
<proteinExistence type="inferred from homology"/>
<accession>B3Q9T5</accession>
<feature type="chain" id="PRO_1000120795" description="Small ribosomal subunit protein bS6">
    <location>
        <begin position="1"/>
        <end position="158"/>
    </location>
</feature>
<feature type="region of interest" description="Disordered" evidence="2">
    <location>
        <begin position="92"/>
        <end position="158"/>
    </location>
</feature>
<feature type="compositionally biased region" description="Basic and acidic residues" evidence="2">
    <location>
        <begin position="92"/>
        <end position="149"/>
    </location>
</feature>
<name>RS6_RHOPT</name>
<reference key="1">
    <citation type="submission" date="2008-05" db="EMBL/GenBank/DDBJ databases">
        <title>Complete sequence of Rhodopseudomonas palustris TIE-1.</title>
        <authorList>
            <consortium name="US DOE Joint Genome Institute"/>
            <person name="Lucas S."/>
            <person name="Copeland A."/>
            <person name="Lapidus A."/>
            <person name="Glavina del Rio T."/>
            <person name="Dalin E."/>
            <person name="Tice H."/>
            <person name="Pitluck S."/>
            <person name="Chain P."/>
            <person name="Malfatti S."/>
            <person name="Shin M."/>
            <person name="Vergez L."/>
            <person name="Lang D."/>
            <person name="Schmutz J."/>
            <person name="Larimer F."/>
            <person name="Land M."/>
            <person name="Hauser L."/>
            <person name="Kyrpides N."/>
            <person name="Mikhailova N."/>
            <person name="Emerson D."/>
            <person name="Newman D.K."/>
            <person name="Roden E."/>
            <person name="Richardson P."/>
        </authorList>
    </citation>
    <scope>NUCLEOTIDE SEQUENCE [LARGE SCALE GENOMIC DNA]</scope>
    <source>
        <strain>TIE-1</strain>
    </source>
</reference>
<protein>
    <recommendedName>
        <fullName evidence="1">Small ribosomal subunit protein bS6</fullName>
    </recommendedName>
    <alternativeName>
        <fullName evidence="3">30S ribosomal protein S6</fullName>
    </alternativeName>
</protein>
<sequence length="158" mass="17932">MPLYEHVFLARQDASAQQVEELTTQITGVIEGLGGKVTKTESWGLRSLTYRMNKNRKAHFVLLNIDGPAAVVSEIERQERINEDVIRYLTVRVDEHEEGPSAMMRKADRDRERDDRGPREGGFRGDREGRGDRDGFRGDRGPRRPREDADAPAAAVEE</sequence>